<feature type="chain" id="PRO_0000387040" description="Ribosomal RNA small subunit methyltransferase H">
    <location>
        <begin position="1"/>
        <end position="300"/>
    </location>
</feature>
<feature type="binding site" evidence="1">
    <location>
        <begin position="46"/>
        <end position="48"/>
    </location>
    <ligand>
        <name>S-adenosyl-L-methionine</name>
        <dbReference type="ChEBI" id="CHEBI:59789"/>
    </ligand>
</feature>
<feature type="binding site" evidence="1">
    <location>
        <position position="65"/>
    </location>
    <ligand>
        <name>S-adenosyl-L-methionine</name>
        <dbReference type="ChEBI" id="CHEBI:59789"/>
    </ligand>
</feature>
<feature type="binding site" evidence="1">
    <location>
        <position position="92"/>
    </location>
    <ligand>
        <name>S-adenosyl-L-methionine</name>
        <dbReference type="ChEBI" id="CHEBI:59789"/>
    </ligand>
</feature>
<feature type="binding site" evidence="1">
    <location>
        <position position="107"/>
    </location>
    <ligand>
        <name>S-adenosyl-L-methionine</name>
        <dbReference type="ChEBI" id="CHEBI:59789"/>
    </ligand>
</feature>
<feature type="binding site" evidence="1">
    <location>
        <position position="114"/>
    </location>
    <ligand>
        <name>S-adenosyl-L-methionine</name>
        <dbReference type="ChEBI" id="CHEBI:59789"/>
    </ligand>
</feature>
<name>RSMH_PROM0</name>
<reference key="1">
    <citation type="journal article" date="2007" name="PLoS Genet.">
        <title>Patterns and implications of gene gain and loss in the evolution of Prochlorococcus.</title>
        <authorList>
            <person name="Kettler G.C."/>
            <person name="Martiny A.C."/>
            <person name="Huang K."/>
            <person name="Zucker J."/>
            <person name="Coleman M.L."/>
            <person name="Rodrigue S."/>
            <person name="Chen F."/>
            <person name="Lapidus A."/>
            <person name="Ferriera S."/>
            <person name="Johnson J."/>
            <person name="Steglich C."/>
            <person name="Church G.M."/>
            <person name="Richardson P."/>
            <person name="Chisholm S.W."/>
        </authorList>
    </citation>
    <scope>NUCLEOTIDE SEQUENCE [LARGE SCALE GENOMIC DNA]</scope>
    <source>
        <strain>MIT 9301</strain>
    </source>
</reference>
<proteinExistence type="inferred from homology"/>
<keyword id="KW-0963">Cytoplasm</keyword>
<keyword id="KW-0489">Methyltransferase</keyword>
<keyword id="KW-1185">Reference proteome</keyword>
<keyword id="KW-0698">rRNA processing</keyword>
<keyword id="KW-0949">S-adenosyl-L-methionine</keyword>
<keyword id="KW-0808">Transferase</keyword>
<protein>
    <recommendedName>
        <fullName evidence="1">Ribosomal RNA small subunit methyltransferase H</fullName>
        <ecNumber evidence="1">2.1.1.199</ecNumber>
    </recommendedName>
    <alternativeName>
        <fullName evidence="1">16S rRNA m(4)C1402 methyltransferase</fullName>
    </alternativeName>
    <alternativeName>
        <fullName evidence="1">rRNA (cytosine-N(4)-)-methyltransferase RsmH</fullName>
    </alternativeName>
</protein>
<organism>
    <name type="scientific">Prochlorococcus marinus (strain MIT 9301)</name>
    <dbReference type="NCBI Taxonomy" id="167546"/>
    <lineage>
        <taxon>Bacteria</taxon>
        <taxon>Bacillati</taxon>
        <taxon>Cyanobacteriota</taxon>
        <taxon>Cyanophyceae</taxon>
        <taxon>Synechococcales</taxon>
        <taxon>Prochlorococcaceae</taxon>
        <taxon>Prochlorococcus</taxon>
    </lineage>
</organism>
<comment type="function">
    <text evidence="1">Specifically methylates the N4 position of cytidine in position 1402 (C1402) of 16S rRNA.</text>
</comment>
<comment type="catalytic activity">
    <reaction evidence="1">
        <text>cytidine(1402) in 16S rRNA + S-adenosyl-L-methionine = N(4)-methylcytidine(1402) in 16S rRNA + S-adenosyl-L-homocysteine + H(+)</text>
        <dbReference type="Rhea" id="RHEA:42928"/>
        <dbReference type="Rhea" id="RHEA-COMP:10286"/>
        <dbReference type="Rhea" id="RHEA-COMP:10287"/>
        <dbReference type="ChEBI" id="CHEBI:15378"/>
        <dbReference type="ChEBI" id="CHEBI:57856"/>
        <dbReference type="ChEBI" id="CHEBI:59789"/>
        <dbReference type="ChEBI" id="CHEBI:74506"/>
        <dbReference type="ChEBI" id="CHEBI:82748"/>
        <dbReference type="EC" id="2.1.1.199"/>
    </reaction>
</comment>
<comment type="subcellular location">
    <subcellularLocation>
        <location evidence="1">Cytoplasm</location>
    </subcellularLocation>
</comment>
<comment type="similarity">
    <text evidence="1">Belongs to the methyltransferase superfamily. RsmH family.</text>
</comment>
<sequence>MQTDLSDSSFFNHKSVMTDEIMASLEHYPLIHNNQLKGIDATLGGGGHSYHLLRKYSDLNIIGLDQDPFARKSALKKLDEFKSRIDIRASNFADFVPKEKVSFVIADLGVNSNQLDDPKRGFSFQKDGPLDMRMNPLLDVDAEKLIEVLNEKDLANLIYKYGDERLSRKIARKIKLDLKENGKYSGTKELAYSIAGCFPPKQRYKKIHPATRTFQALRIAVNKEIEVLEKFLQVVPEWLLPGGIISVISFHSLEDRLVKSCFKNDQRLKNLTKKPITPSEEEVELNKRARSGKLRIAQLN</sequence>
<dbReference type="EC" id="2.1.1.199" evidence="1"/>
<dbReference type="EMBL" id="CP000576">
    <property type="protein sequence ID" value="ABO16814.1"/>
    <property type="molecule type" value="Genomic_DNA"/>
</dbReference>
<dbReference type="RefSeq" id="WP_011862216.1">
    <property type="nucleotide sequence ID" value="NC_009091.1"/>
</dbReference>
<dbReference type="SMR" id="A3PAN9"/>
<dbReference type="STRING" id="167546.P9301_01911"/>
<dbReference type="KEGG" id="pmg:P9301_01911"/>
<dbReference type="eggNOG" id="COG0275">
    <property type="taxonomic scope" value="Bacteria"/>
</dbReference>
<dbReference type="HOGENOM" id="CLU_038422_3_0_3"/>
<dbReference type="OrthoDB" id="9806637at2"/>
<dbReference type="Proteomes" id="UP000001430">
    <property type="component" value="Chromosome"/>
</dbReference>
<dbReference type="GO" id="GO:0005737">
    <property type="term" value="C:cytoplasm"/>
    <property type="evidence" value="ECO:0007669"/>
    <property type="project" value="UniProtKB-SubCell"/>
</dbReference>
<dbReference type="GO" id="GO:0071424">
    <property type="term" value="F:rRNA (cytosine-N4-)-methyltransferase activity"/>
    <property type="evidence" value="ECO:0007669"/>
    <property type="project" value="UniProtKB-UniRule"/>
</dbReference>
<dbReference type="GO" id="GO:0070475">
    <property type="term" value="P:rRNA base methylation"/>
    <property type="evidence" value="ECO:0007669"/>
    <property type="project" value="UniProtKB-UniRule"/>
</dbReference>
<dbReference type="Gene3D" id="1.10.150.170">
    <property type="entry name" value="Putative methyltransferase TM0872, insert domain"/>
    <property type="match status" value="1"/>
</dbReference>
<dbReference type="Gene3D" id="3.40.50.150">
    <property type="entry name" value="Vaccinia Virus protein VP39"/>
    <property type="match status" value="1"/>
</dbReference>
<dbReference type="HAMAP" id="MF_01007">
    <property type="entry name" value="16SrRNA_methyltr_H"/>
    <property type="match status" value="1"/>
</dbReference>
<dbReference type="InterPro" id="IPR002903">
    <property type="entry name" value="RsmH"/>
</dbReference>
<dbReference type="InterPro" id="IPR023397">
    <property type="entry name" value="SAM-dep_MeTrfase_MraW_recog"/>
</dbReference>
<dbReference type="InterPro" id="IPR029063">
    <property type="entry name" value="SAM-dependent_MTases_sf"/>
</dbReference>
<dbReference type="NCBIfam" id="TIGR00006">
    <property type="entry name" value="16S rRNA (cytosine(1402)-N(4))-methyltransferase RsmH"/>
    <property type="match status" value="1"/>
</dbReference>
<dbReference type="PANTHER" id="PTHR11265:SF0">
    <property type="entry name" value="12S RRNA N4-METHYLCYTIDINE METHYLTRANSFERASE"/>
    <property type="match status" value="1"/>
</dbReference>
<dbReference type="PANTHER" id="PTHR11265">
    <property type="entry name" value="S-ADENOSYL-METHYLTRANSFERASE MRAW"/>
    <property type="match status" value="1"/>
</dbReference>
<dbReference type="Pfam" id="PF01795">
    <property type="entry name" value="Methyltransf_5"/>
    <property type="match status" value="1"/>
</dbReference>
<dbReference type="PIRSF" id="PIRSF004486">
    <property type="entry name" value="MraW"/>
    <property type="match status" value="1"/>
</dbReference>
<dbReference type="SUPFAM" id="SSF81799">
    <property type="entry name" value="Putative methyltransferase TM0872, insert domain"/>
    <property type="match status" value="1"/>
</dbReference>
<dbReference type="SUPFAM" id="SSF53335">
    <property type="entry name" value="S-adenosyl-L-methionine-dependent methyltransferases"/>
    <property type="match status" value="1"/>
</dbReference>
<gene>
    <name evidence="1" type="primary">rsmH</name>
    <name type="synonym">mraW</name>
    <name type="ordered locus">P9301_01911</name>
</gene>
<evidence type="ECO:0000255" key="1">
    <source>
        <dbReference type="HAMAP-Rule" id="MF_01007"/>
    </source>
</evidence>
<accession>A3PAN9</accession>